<evidence type="ECO:0000269" key="1">
    <source>
    </source>
</evidence>
<evidence type="ECO:0000269" key="2">
    <source>
    </source>
</evidence>
<evidence type="ECO:0000305" key="3"/>
<accession>P81217</accession>
<sequence>XQDPQSETDYSQLSGEWNT</sequence>
<comment type="subcellular location">
    <subcellularLocation>
        <location evidence="3">Secreted</location>
    </subcellularLocation>
</comment>
<comment type="mass spectrometry"/>
<comment type="allergen">
    <text evidence="2">Causes an allergic reaction in human. Potent allergen of horse dander.</text>
</comment>
<comment type="similarity">
    <text evidence="3">Belongs to the calycin superfamily. Lipocalin family.</text>
</comment>
<comment type="caution">
    <text evidence="3">Equ c 2.0101 and c 2.0102 might be two variants of the same protein.</text>
</comment>
<feature type="chain" id="PRO_0000201033" description="Dander allergen Equ c 2.0102">
    <location>
        <begin position="1"/>
        <end position="19" status="greater than"/>
    </location>
</feature>
<feature type="non-terminal residue">
    <location>
        <position position="19"/>
    </location>
</feature>
<proteinExistence type="evidence at protein level"/>
<organism>
    <name type="scientific">Equus caballus</name>
    <name type="common">Horse</name>
    <dbReference type="NCBI Taxonomy" id="9796"/>
    <lineage>
        <taxon>Eukaryota</taxon>
        <taxon>Metazoa</taxon>
        <taxon>Chordata</taxon>
        <taxon>Craniata</taxon>
        <taxon>Vertebrata</taxon>
        <taxon>Euteleostomi</taxon>
        <taxon>Mammalia</taxon>
        <taxon>Eutheria</taxon>
        <taxon>Laurasiatheria</taxon>
        <taxon>Perissodactyla</taxon>
        <taxon>Equidae</taxon>
        <taxon>Equus</taxon>
    </lineage>
</organism>
<keyword id="KW-0020">Allergen</keyword>
<keyword id="KW-0903">Direct protein sequencing</keyword>
<keyword id="KW-1185">Reference proteome</keyword>
<keyword id="KW-0964">Secreted</keyword>
<keyword id="KW-0813">Transport</keyword>
<protein>
    <recommendedName>
        <fullName>Dander allergen Equ c 2.0102</fullName>
    </recommendedName>
    <allergenName>Equ c 2.0102</allergenName>
</protein>
<name>ALL22_HORSE</name>
<dbReference type="Allergome" id="332">
    <property type="allergen name" value="Equ c 2"/>
</dbReference>
<dbReference type="Allergome" id="334">
    <property type="allergen name" value="Equ c 2.0102"/>
</dbReference>
<dbReference type="InParanoid" id="P81217"/>
<dbReference type="Proteomes" id="UP000002281">
    <property type="component" value="Unplaced"/>
</dbReference>
<dbReference type="GO" id="GO:0005576">
    <property type="term" value="C:extracellular region"/>
    <property type="evidence" value="ECO:0007669"/>
    <property type="project" value="UniProtKB-SubCell"/>
</dbReference>
<reference key="1">
    <citation type="journal article" date="1998" name="Eur. J. Biochem.">
        <title>Separation of horse dander allergen proteins by two-dimensional electrophoresis -- molecular characterisation and identification of Equ c 2.0101 and Equ c 2.0102 as lipocalin proteins.</title>
        <authorList>
            <person name="Bulone V."/>
            <person name="Krogstad-Johnsen T."/>
            <person name="Smestad-Paulsen B."/>
        </authorList>
    </citation>
    <scope>PROTEIN SEQUENCE</scope>
    <scope>ALLERGEN</scope>
    <source>
        <tissue>Skin</tissue>
    </source>
</reference>
<reference key="2">
    <citation type="journal article" date="2001" name="Eur. J. Biochem.">
        <title>Biochemical characterization and surfactant properties of horse allergens.</title>
        <authorList>
            <person name="Goubran Botros H."/>
            <person name="Poncet P."/>
            <person name="Rabillon J."/>
            <person name="Fontaine T."/>
            <person name="Laval J.-M."/>
            <person name="David B."/>
        </authorList>
    </citation>
    <scope>MASS SPECTROMETRY</scope>
    <source>
        <tissue>Dander</tissue>
    </source>
</reference>